<sequence length="214" mass="25004">MSTKLQDHFDKITKILSGFGVEGCISYGEITFSIRDQRDIHLILKKLKKEYLFEQLTDVTAVDYLTYGQSDWQVGKVVSQTGFSRGRQQDFKTAAVDNRFEIIYQLLSMANNVRIRVKCKLKDAQIILVDSVSDLWPSANWTEREVYDMFGIYFNNHPDLRRVLTDYGFVGHPLRKDFPQTGYVEMRYDENLGRVVYEPVEIDDRVNTPRVIRN</sequence>
<feature type="chain" id="PRO_0000358103" description="NADH-quinone oxidoreductase subunit C">
    <location>
        <begin position="1"/>
        <end position="214"/>
    </location>
</feature>
<name>NUOC_FRATW</name>
<organism>
    <name type="scientific">Francisella tularensis subsp. tularensis (strain WY96-3418)</name>
    <dbReference type="NCBI Taxonomy" id="418136"/>
    <lineage>
        <taxon>Bacteria</taxon>
        <taxon>Pseudomonadati</taxon>
        <taxon>Pseudomonadota</taxon>
        <taxon>Gammaproteobacteria</taxon>
        <taxon>Thiotrichales</taxon>
        <taxon>Francisellaceae</taxon>
        <taxon>Francisella</taxon>
    </lineage>
</organism>
<accession>A4IVZ4</accession>
<keyword id="KW-0997">Cell inner membrane</keyword>
<keyword id="KW-1003">Cell membrane</keyword>
<keyword id="KW-0472">Membrane</keyword>
<keyword id="KW-0520">NAD</keyword>
<keyword id="KW-0874">Quinone</keyword>
<keyword id="KW-1278">Translocase</keyword>
<keyword id="KW-0813">Transport</keyword>
<keyword id="KW-0830">Ubiquinone</keyword>
<evidence type="ECO:0000255" key="1">
    <source>
        <dbReference type="HAMAP-Rule" id="MF_01357"/>
    </source>
</evidence>
<gene>
    <name evidence="1" type="primary">nuoC</name>
    <name type="ordered locus">FTW_0108</name>
</gene>
<comment type="function">
    <text evidence="1">NDH-1 shuttles electrons from NADH, via FMN and iron-sulfur (Fe-S) centers, to quinones in the respiratory chain. The immediate electron acceptor for the enzyme in this species is believed to be ubiquinone. Couples the redox reaction to proton translocation (for every two electrons transferred, four hydrogen ions are translocated across the cytoplasmic membrane), and thus conserves the redox energy in a proton gradient.</text>
</comment>
<comment type="catalytic activity">
    <reaction evidence="1">
        <text>a quinone + NADH + 5 H(+)(in) = a quinol + NAD(+) + 4 H(+)(out)</text>
        <dbReference type="Rhea" id="RHEA:57888"/>
        <dbReference type="ChEBI" id="CHEBI:15378"/>
        <dbReference type="ChEBI" id="CHEBI:24646"/>
        <dbReference type="ChEBI" id="CHEBI:57540"/>
        <dbReference type="ChEBI" id="CHEBI:57945"/>
        <dbReference type="ChEBI" id="CHEBI:132124"/>
    </reaction>
</comment>
<comment type="subunit">
    <text evidence="1">NDH-1 is composed of 14 different subunits. Subunits NuoB, C, D, E, F, and G constitute the peripheral sector of the complex.</text>
</comment>
<comment type="subcellular location">
    <subcellularLocation>
        <location evidence="1">Cell inner membrane</location>
        <topology evidence="1">Peripheral membrane protein</topology>
        <orientation evidence="1">Cytoplasmic side</orientation>
    </subcellularLocation>
</comment>
<comment type="similarity">
    <text evidence="1">Belongs to the complex I 30 kDa subunit family.</text>
</comment>
<reference key="1">
    <citation type="journal article" date="2007" name="PLoS ONE">
        <title>Complete genomic characterization of a pathogenic A.II strain of Francisella tularensis subspecies tularensis.</title>
        <authorList>
            <person name="Beckstrom-Sternberg S.M."/>
            <person name="Auerbach R.K."/>
            <person name="Godbole S."/>
            <person name="Pearson J.V."/>
            <person name="Beckstrom-Sternberg J.S."/>
            <person name="Deng Z."/>
            <person name="Munk C."/>
            <person name="Kubota K."/>
            <person name="Zhou Y."/>
            <person name="Bruce D."/>
            <person name="Noronha J."/>
            <person name="Scheuermann R.H."/>
            <person name="Wang A."/>
            <person name="Wei X."/>
            <person name="Wang J."/>
            <person name="Hao J."/>
            <person name="Wagner D.M."/>
            <person name="Brettin T.S."/>
            <person name="Brown N."/>
            <person name="Gilna P."/>
            <person name="Keim P.S."/>
        </authorList>
    </citation>
    <scope>NUCLEOTIDE SEQUENCE [LARGE SCALE GENOMIC DNA]</scope>
    <source>
        <strain>WY96-3418</strain>
    </source>
</reference>
<dbReference type="EC" id="7.1.1.-" evidence="1"/>
<dbReference type="EMBL" id="CP000608">
    <property type="protein sequence ID" value="ABO46096.1"/>
    <property type="molecule type" value="Genomic_DNA"/>
</dbReference>
<dbReference type="RefSeq" id="WP_003027728.1">
    <property type="nucleotide sequence ID" value="NC_009257.1"/>
</dbReference>
<dbReference type="SMR" id="A4IVZ4"/>
<dbReference type="KEGG" id="ftw:FTW_0108"/>
<dbReference type="HOGENOM" id="CLU_042628_2_1_6"/>
<dbReference type="GO" id="GO:0005886">
    <property type="term" value="C:plasma membrane"/>
    <property type="evidence" value="ECO:0007669"/>
    <property type="project" value="UniProtKB-SubCell"/>
</dbReference>
<dbReference type="GO" id="GO:0008137">
    <property type="term" value="F:NADH dehydrogenase (ubiquinone) activity"/>
    <property type="evidence" value="ECO:0007669"/>
    <property type="project" value="InterPro"/>
</dbReference>
<dbReference type="GO" id="GO:0050136">
    <property type="term" value="F:NADH:ubiquinone reductase (non-electrogenic) activity"/>
    <property type="evidence" value="ECO:0007669"/>
    <property type="project" value="UniProtKB-UniRule"/>
</dbReference>
<dbReference type="GO" id="GO:0048038">
    <property type="term" value="F:quinone binding"/>
    <property type="evidence" value="ECO:0007669"/>
    <property type="project" value="UniProtKB-KW"/>
</dbReference>
<dbReference type="Gene3D" id="3.30.460.80">
    <property type="entry name" value="NADH:ubiquinone oxidoreductase, 30kDa subunit"/>
    <property type="match status" value="1"/>
</dbReference>
<dbReference type="HAMAP" id="MF_01357">
    <property type="entry name" value="NDH1_NuoC"/>
    <property type="match status" value="1"/>
</dbReference>
<dbReference type="InterPro" id="IPR010218">
    <property type="entry name" value="NADH_DH_suC"/>
</dbReference>
<dbReference type="InterPro" id="IPR037232">
    <property type="entry name" value="NADH_quin_OxRdtase_su_C/D-like"/>
</dbReference>
<dbReference type="InterPro" id="IPR001268">
    <property type="entry name" value="NADH_UbQ_OxRdtase_30kDa_su"/>
</dbReference>
<dbReference type="InterPro" id="IPR020396">
    <property type="entry name" value="NADH_UbQ_OxRdtase_CS"/>
</dbReference>
<dbReference type="NCBIfam" id="TIGR01961">
    <property type="entry name" value="NuoC_fam"/>
    <property type="match status" value="1"/>
</dbReference>
<dbReference type="NCBIfam" id="NF004730">
    <property type="entry name" value="PRK06074.1-1"/>
    <property type="match status" value="1"/>
</dbReference>
<dbReference type="PANTHER" id="PTHR10884:SF14">
    <property type="entry name" value="NADH DEHYDROGENASE [UBIQUINONE] IRON-SULFUR PROTEIN 3, MITOCHONDRIAL"/>
    <property type="match status" value="1"/>
</dbReference>
<dbReference type="PANTHER" id="PTHR10884">
    <property type="entry name" value="NADH DEHYDROGENASE UBIQUINONE IRON-SULFUR PROTEIN 3"/>
    <property type="match status" value="1"/>
</dbReference>
<dbReference type="Pfam" id="PF00329">
    <property type="entry name" value="Complex1_30kDa"/>
    <property type="match status" value="1"/>
</dbReference>
<dbReference type="SUPFAM" id="SSF143243">
    <property type="entry name" value="Nqo5-like"/>
    <property type="match status" value="1"/>
</dbReference>
<dbReference type="PROSITE" id="PS00542">
    <property type="entry name" value="COMPLEX1_30K"/>
    <property type="match status" value="1"/>
</dbReference>
<proteinExistence type="inferred from homology"/>
<protein>
    <recommendedName>
        <fullName evidence="1">NADH-quinone oxidoreductase subunit C</fullName>
        <ecNumber evidence="1">7.1.1.-</ecNumber>
    </recommendedName>
    <alternativeName>
        <fullName evidence="1">NADH dehydrogenase I subunit C</fullName>
    </alternativeName>
    <alternativeName>
        <fullName evidence="1">NDH-1 subunit C</fullName>
    </alternativeName>
</protein>